<gene>
    <name type="primary">livF</name>
    <name type="synonym">livG</name>
    <name type="ordered locus">STM3560</name>
</gene>
<accession>P0A191</accession>
<accession>P30294</accession>
<proteinExistence type="inferred from homology"/>
<name>LIVF_SALTY</name>
<keyword id="KW-0029">Amino-acid transport</keyword>
<keyword id="KW-0067">ATP-binding</keyword>
<keyword id="KW-0547">Nucleotide-binding</keyword>
<keyword id="KW-1185">Reference proteome</keyword>
<keyword id="KW-0813">Transport</keyword>
<evidence type="ECO:0000255" key="1">
    <source>
        <dbReference type="PROSITE-ProRule" id="PRU00434"/>
    </source>
</evidence>
<evidence type="ECO:0000305" key="2"/>
<comment type="function">
    <text>Component of the high-affinity branched-chain amino acid transport system.</text>
</comment>
<comment type="similarity">
    <text evidence="2">Belongs to the ABC transporter superfamily.</text>
</comment>
<comment type="caution">
    <text evidence="2">Called LivG in S.typhimurium, but we renamed it to LivF for the sake of consistency with the E.coli protein.</text>
</comment>
<dbReference type="EMBL" id="D12589">
    <property type="protein sequence ID" value="BAA02132.1"/>
    <property type="molecule type" value="Genomic_DNA"/>
</dbReference>
<dbReference type="EMBL" id="AE006468">
    <property type="protein sequence ID" value="AAL22420.1"/>
    <property type="molecule type" value="Genomic_DNA"/>
</dbReference>
<dbReference type="PIR" id="JH0671">
    <property type="entry name" value="JH0671"/>
</dbReference>
<dbReference type="RefSeq" id="NP_462461.1">
    <property type="nucleotide sequence ID" value="NC_003197.2"/>
</dbReference>
<dbReference type="RefSeq" id="WP_000416114.1">
    <property type="nucleotide sequence ID" value="NC_003197.2"/>
</dbReference>
<dbReference type="SMR" id="P0A191"/>
<dbReference type="STRING" id="99287.STM3560"/>
<dbReference type="PaxDb" id="99287-STM3560"/>
<dbReference type="GeneID" id="1255083"/>
<dbReference type="KEGG" id="stm:STM3560"/>
<dbReference type="PATRIC" id="fig|99287.12.peg.3763"/>
<dbReference type="HOGENOM" id="CLU_000604_1_2_6"/>
<dbReference type="OMA" id="IMMQKIM"/>
<dbReference type="PhylomeDB" id="P0A191"/>
<dbReference type="BioCyc" id="SENT99287:STM3560-MONOMER"/>
<dbReference type="Proteomes" id="UP000001014">
    <property type="component" value="Chromosome"/>
</dbReference>
<dbReference type="GO" id="GO:0005524">
    <property type="term" value="F:ATP binding"/>
    <property type="evidence" value="ECO:0007669"/>
    <property type="project" value="UniProtKB-KW"/>
</dbReference>
<dbReference type="GO" id="GO:0016887">
    <property type="term" value="F:ATP hydrolysis activity"/>
    <property type="evidence" value="ECO:0007669"/>
    <property type="project" value="InterPro"/>
</dbReference>
<dbReference type="GO" id="GO:0015658">
    <property type="term" value="F:branched-chain amino acid transmembrane transporter activity"/>
    <property type="evidence" value="ECO:0007669"/>
    <property type="project" value="InterPro"/>
</dbReference>
<dbReference type="GO" id="GO:0015807">
    <property type="term" value="P:L-amino acid transport"/>
    <property type="evidence" value="ECO:0000318"/>
    <property type="project" value="GO_Central"/>
</dbReference>
<dbReference type="CDD" id="cd03224">
    <property type="entry name" value="ABC_TM1139_LivF_branched"/>
    <property type="match status" value="1"/>
</dbReference>
<dbReference type="FunFam" id="3.40.50.300:FF:000341">
    <property type="entry name" value="High-affinity branched-chain amino acid transport ATP-binding protein"/>
    <property type="match status" value="1"/>
</dbReference>
<dbReference type="Gene3D" id="3.40.50.300">
    <property type="entry name" value="P-loop containing nucleotide triphosphate hydrolases"/>
    <property type="match status" value="1"/>
</dbReference>
<dbReference type="InterPro" id="IPR003593">
    <property type="entry name" value="AAA+_ATPase"/>
</dbReference>
<dbReference type="InterPro" id="IPR030660">
    <property type="entry name" value="ABC_branched_ATPase_LivF/BraG"/>
</dbReference>
<dbReference type="InterPro" id="IPR003439">
    <property type="entry name" value="ABC_transporter-like_ATP-bd"/>
</dbReference>
<dbReference type="InterPro" id="IPR017871">
    <property type="entry name" value="ABC_transporter-like_CS"/>
</dbReference>
<dbReference type="InterPro" id="IPR052156">
    <property type="entry name" value="BCAA_Transport_ATP-bd_LivF"/>
</dbReference>
<dbReference type="InterPro" id="IPR027417">
    <property type="entry name" value="P-loop_NTPase"/>
</dbReference>
<dbReference type="NCBIfam" id="NF008626">
    <property type="entry name" value="PRK11614.1"/>
    <property type="match status" value="1"/>
</dbReference>
<dbReference type="PANTHER" id="PTHR43820">
    <property type="entry name" value="HIGH-AFFINITY BRANCHED-CHAIN AMINO ACID TRANSPORT ATP-BINDING PROTEIN LIVF"/>
    <property type="match status" value="1"/>
</dbReference>
<dbReference type="PANTHER" id="PTHR43820:SF4">
    <property type="entry name" value="HIGH-AFFINITY BRANCHED-CHAIN AMINO ACID TRANSPORT ATP-BINDING PROTEIN LIVF"/>
    <property type="match status" value="1"/>
</dbReference>
<dbReference type="Pfam" id="PF00005">
    <property type="entry name" value="ABC_tran"/>
    <property type="match status" value="1"/>
</dbReference>
<dbReference type="PIRSF" id="PIRSF039137">
    <property type="entry name" value="ABC_branched_ATPase"/>
    <property type="match status" value="1"/>
</dbReference>
<dbReference type="SMART" id="SM00382">
    <property type="entry name" value="AAA"/>
    <property type="match status" value="1"/>
</dbReference>
<dbReference type="SUPFAM" id="SSF52540">
    <property type="entry name" value="P-loop containing nucleoside triphosphate hydrolases"/>
    <property type="match status" value="1"/>
</dbReference>
<dbReference type="PROSITE" id="PS00211">
    <property type="entry name" value="ABC_TRANSPORTER_1"/>
    <property type="match status" value="1"/>
</dbReference>
<dbReference type="PROSITE" id="PS50893">
    <property type="entry name" value="ABC_TRANSPORTER_2"/>
    <property type="match status" value="1"/>
</dbReference>
<reference key="1">
    <citation type="journal article" date="1992" name="J. Biochem.">
        <title>Nucleotide sequences and characterization of liv genes encoding components of the high-affinity branched-chain amino acid transport system in Salmonella typhimurium.</title>
        <authorList>
            <person name="Matsubara K."/>
            <person name="Ohnishi K."/>
            <person name="Kiritani K."/>
        </authorList>
    </citation>
    <scope>NUCLEOTIDE SEQUENCE [GENOMIC DNA]</scope>
    <source>
        <strain>LT2</strain>
    </source>
</reference>
<reference key="2">
    <citation type="journal article" date="2001" name="Nature">
        <title>Complete genome sequence of Salmonella enterica serovar Typhimurium LT2.</title>
        <authorList>
            <person name="McClelland M."/>
            <person name="Sanderson K.E."/>
            <person name="Spieth J."/>
            <person name="Clifton S.W."/>
            <person name="Latreille P."/>
            <person name="Courtney L."/>
            <person name="Porwollik S."/>
            <person name="Ali J."/>
            <person name="Dante M."/>
            <person name="Du F."/>
            <person name="Hou S."/>
            <person name="Layman D."/>
            <person name="Leonard S."/>
            <person name="Nguyen C."/>
            <person name="Scott K."/>
            <person name="Holmes A."/>
            <person name="Grewal N."/>
            <person name="Mulvaney E."/>
            <person name="Ryan E."/>
            <person name="Sun H."/>
            <person name="Florea L."/>
            <person name="Miller W."/>
            <person name="Stoneking T."/>
            <person name="Nhan M."/>
            <person name="Waterston R."/>
            <person name="Wilson R.K."/>
        </authorList>
    </citation>
    <scope>NUCLEOTIDE SEQUENCE [LARGE SCALE GENOMIC DNA]</scope>
    <source>
        <strain>LT2 / SGSC1412 / ATCC 700720</strain>
    </source>
</reference>
<sequence>MEKTMLTFEKVSAHYGKIQALHDVSLHINQGEIVTLIGANGAGKTTLLGTLCGDPRASSGRVVFDGKDITDWQTAKIMREAVAIVPEGRRVFSRMTVEENLAMGGFFAERDRFQERIKWVYELFPRLHERRIQRAGTMSGGEQQMLAIGRALMSQPRLLLLDEPSLGLAPIIIQQIFDTIEQLREQGMTIFLVEQNANQALKLADRGYVLENGHVVLSDTGDALLANEAVRSAYLGG</sequence>
<feature type="chain" id="PRO_0000092403" description="High-affinity branched-chain amino acid transport ATP-binding protein LivF">
    <location>
        <begin position="1"/>
        <end position="237"/>
    </location>
</feature>
<feature type="domain" description="ABC transporter" evidence="1">
    <location>
        <begin position="6"/>
        <end position="237"/>
    </location>
</feature>
<feature type="binding site" evidence="1">
    <location>
        <begin position="38"/>
        <end position="45"/>
    </location>
    <ligand>
        <name>ATP</name>
        <dbReference type="ChEBI" id="CHEBI:30616"/>
    </ligand>
</feature>
<organism>
    <name type="scientific">Salmonella typhimurium (strain LT2 / SGSC1412 / ATCC 700720)</name>
    <dbReference type="NCBI Taxonomy" id="99287"/>
    <lineage>
        <taxon>Bacteria</taxon>
        <taxon>Pseudomonadati</taxon>
        <taxon>Pseudomonadota</taxon>
        <taxon>Gammaproteobacteria</taxon>
        <taxon>Enterobacterales</taxon>
        <taxon>Enterobacteriaceae</taxon>
        <taxon>Salmonella</taxon>
    </lineage>
</organism>
<protein>
    <recommendedName>
        <fullName>High-affinity branched-chain amino acid transport ATP-binding protein LivF</fullName>
    </recommendedName>
    <alternativeName>
        <fullName>LIV-I protein F</fullName>
    </alternativeName>
</protein>